<sequence>MRYPLGEALLALYRWRGPLINAGVGGHGYTYLLGAEANRFVFANADAFSWSQTFESLVPVDGPTALIVSDGADHRRRRSVVAPGLRHHHVQRYVATMVSNIDTVIDGWQPGQRLDIYQELRSAVRRSTAESLFGQRLAVHSDFLGEQLQPLLDLTRRPPQVMRLQQRVNSPGWRRAMAARKRIDDLIDAQIADARTAPRPDDHMLTTLISGCSEEGTTLSDNEIRDSIVSLITAGYETTSGALAWAIYALLTVPGTWESAASEVARVLGGRVPAADDLSALTYLNGVVHETLRLYSPGVISARRVLRDLWFDGHRIRAGRLLIFSAYVTHRLPEIWPEPTEFRPLRWDPNAADYRKPAPHEFIPFSGGLHRCIGAVMATTEMTVILARLVARAMLQLPAQRTHRIRAANFAALRPWPGLTVEIRKSAPAQ</sequence>
<proteinExistence type="inferred from homology"/>
<name>CP139_MYCTO</name>
<reference key="1">
    <citation type="journal article" date="2002" name="J. Bacteriol.">
        <title>Whole-genome comparison of Mycobacterium tuberculosis clinical and laboratory strains.</title>
        <authorList>
            <person name="Fleischmann R.D."/>
            <person name="Alland D."/>
            <person name="Eisen J.A."/>
            <person name="Carpenter L."/>
            <person name="White O."/>
            <person name="Peterson J.D."/>
            <person name="DeBoy R.T."/>
            <person name="Dodson R.J."/>
            <person name="Gwinn M.L."/>
            <person name="Haft D.H."/>
            <person name="Hickey E.K."/>
            <person name="Kolonay J.F."/>
            <person name="Nelson W.C."/>
            <person name="Umayam L.A."/>
            <person name="Ermolaeva M.D."/>
            <person name="Salzberg S.L."/>
            <person name="Delcher A."/>
            <person name="Utterback T.R."/>
            <person name="Weidman J.F."/>
            <person name="Khouri H.M."/>
            <person name="Gill J."/>
            <person name="Mikula A."/>
            <person name="Bishai W."/>
            <person name="Jacobs W.R. Jr."/>
            <person name="Venter J.C."/>
            <person name="Fraser C.M."/>
        </authorList>
    </citation>
    <scope>NUCLEOTIDE SEQUENCE [LARGE SCALE GENOMIC DNA]</scope>
    <source>
        <strain>CDC 1551 / Oshkosh</strain>
    </source>
</reference>
<protein>
    <recommendedName>
        <fullName>Putative cytochrome P450 139</fullName>
        <ecNumber>1.14.-.-</ecNumber>
    </recommendedName>
</protein>
<feature type="chain" id="PRO_0000426928" description="Putative cytochrome P450 139">
    <location>
        <begin position="1"/>
        <end position="430"/>
    </location>
</feature>
<feature type="binding site" description="axial binding residue" evidence="1">
    <location>
        <position position="372"/>
    </location>
    <ligand>
        <name>heme</name>
        <dbReference type="ChEBI" id="CHEBI:30413"/>
    </ligand>
    <ligandPart>
        <name>Fe</name>
        <dbReference type="ChEBI" id="CHEBI:18248"/>
    </ligandPart>
</feature>
<comment type="cofactor">
    <cofactor evidence="1">
        <name>heme</name>
        <dbReference type="ChEBI" id="CHEBI:30413"/>
    </cofactor>
</comment>
<comment type="similarity">
    <text evidence="2">Belongs to the cytochrome P450 family.</text>
</comment>
<comment type="sequence caution" evidence="2">
    <conflict type="erroneous initiation">
        <sequence resource="EMBL-CDS" id="AAK45973"/>
    </conflict>
</comment>
<accession>P9WPM0</accession>
<accession>D0EW72</accession>
<accession>F2GKM3</accession>
<accession>O86330</accession>
<accession>P63719</accession>
<gene>
    <name type="primary">cyp139</name>
    <name type="ordered locus">MT1706</name>
</gene>
<organism>
    <name type="scientific">Mycobacterium tuberculosis (strain CDC 1551 / Oshkosh)</name>
    <dbReference type="NCBI Taxonomy" id="83331"/>
    <lineage>
        <taxon>Bacteria</taxon>
        <taxon>Bacillati</taxon>
        <taxon>Actinomycetota</taxon>
        <taxon>Actinomycetes</taxon>
        <taxon>Mycobacteriales</taxon>
        <taxon>Mycobacteriaceae</taxon>
        <taxon>Mycobacterium</taxon>
        <taxon>Mycobacterium tuberculosis complex</taxon>
    </lineage>
</organism>
<evidence type="ECO:0000250" key="1"/>
<evidence type="ECO:0000305" key="2"/>
<keyword id="KW-0349">Heme</keyword>
<keyword id="KW-0408">Iron</keyword>
<keyword id="KW-0479">Metal-binding</keyword>
<keyword id="KW-0503">Monooxygenase</keyword>
<keyword id="KW-0560">Oxidoreductase</keyword>
<keyword id="KW-1185">Reference proteome</keyword>
<dbReference type="EC" id="1.14.-.-"/>
<dbReference type="EMBL" id="AE000516">
    <property type="protein sequence ID" value="AAK45973.1"/>
    <property type="status" value="ALT_INIT"/>
    <property type="molecule type" value="Genomic_DNA"/>
</dbReference>
<dbReference type="PIR" id="D70985">
    <property type="entry name" value="D70985"/>
</dbReference>
<dbReference type="RefSeq" id="WP_003901231.1">
    <property type="nucleotide sequence ID" value="NZ_KK341227.1"/>
</dbReference>
<dbReference type="SMR" id="P9WPM0"/>
<dbReference type="KEGG" id="mtc:MT1706"/>
<dbReference type="PATRIC" id="fig|83331.31.peg.1831"/>
<dbReference type="HOGENOM" id="CLU_001570_5_1_11"/>
<dbReference type="Proteomes" id="UP000001020">
    <property type="component" value="Chromosome"/>
</dbReference>
<dbReference type="GO" id="GO:0020037">
    <property type="term" value="F:heme binding"/>
    <property type="evidence" value="ECO:0007669"/>
    <property type="project" value="InterPro"/>
</dbReference>
<dbReference type="GO" id="GO:0005506">
    <property type="term" value="F:iron ion binding"/>
    <property type="evidence" value="ECO:0007669"/>
    <property type="project" value="InterPro"/>
</dbReference>
<dbReference type="GO" id="GO:0004497">
    <property type="term" value="F:monooxygenase activity"/>
    <property type="evidence" value="ECO:0007669"/>
    <property type="project" value="UniProtKB-KW"/>
</dbReference>
<dbReference type="GO" id="GO:0016705">
    <property type="term" value="F:oxidoreductase activity, acting on paired donors, with incorporation or reduction of molecular oxygen"/>
    <property type="evidence" value="ECO:0007669"/>
    <property type="project" value="InterPro"/>
</dbReference>
<dbReference type="CDD" id="cd11053">
    <property type="entry name" value="CYP110-like"/>
    <property type="match status" value="1"/>
</dbReference>
<dbReference type="Gene3D" id="1.10.630.10">
    <property type="entry name" value="Cytochrome P450"/>
    <property type="match status" value="1"/>
</dbReference>
<dbReference type="InterPro" id="IPR001128">
    <property type="entry name" value="Cyt_P450"/>
</dbReference>
<dbReference type="InterPro" id="IPR017972">
    <property type="entry name" value="Cyt_P450_CS"/>
</dbReference>
<dbReference type="InterPro" id="IPR002403">
    <property type="entry name" value="Cyt_P450_E_grp-IV"/>
</dbReference>
<dbReference type="InterPro" id="IPR036396">
    <property type="entry name" value="Cyt_P450_sf"/>
</dbReference>
<dbReference type="InterPro" id="IPR050121">
    <property type="entry name" value="Cytochrome_P450_monoxygenase"/>
</dbReference>
<dbReference type="PANTHER" id="PTHR24305">
    <property type="entry name" value="CYTOCHROME P450"/>
    <property type="match status" value="1"/>
</dbReference>
<dbReference type="PANTHER" id="PTHR24305:SF166">
    <property type="entry name" value="CYTOCHROME P450 12A4, MITOCHONDRIAL-RELATED"/>
    <property type="match status" value="1"/>
</dbReference>
<dbReference type="Pfam" id="PF00067">
    <property type="entry name" value="p450"/>
    <property type="match status" value="1"/>
</dbReference>
<dbReference type="PRINTS" id="PR00465">
    <property type="entry name" value="EP450IV"/>
</dbReference>
<dbReference type="PRINTS" id="PR00385">
    <property type="entry name" value="P450"/>
</dbReference>
<dbReference type="SUPFAM" id="SSF48264">
    <property type="entry name" value="Cytochrome P450"/>
    <property type="match status" value="1"/>
</dbReference>
<dbReference type="PROSITE" id="PS00086">
    <property type="entry name" value="CYTOCHROME_P450"/>
    <property type="match status" value="1"/>
</dbReference>